<name>SYT_SYNE7</name>
<comment type="function">
    <text evidence="1">Catalyzes the attachment of threonine to tRNA(Thr) in a two-step reaction: L-threonine is first activated by ATP to form Thr-AMP and then transferred to the acceptor end of tRNA(Thr). Also edits incorrectly charged L-seryl-tRNA(Thr).</text>
</comment>
<comment type="catalytic activity">
    <reaction evidence="1">
        <text>tRNA(Thr) + L-threonine + ATP = L-threonyl-tRNA(Thr) + AMP + diphosphate + H(+)</text>
        <dbReference type="Rhea" id="RHEA:24624"/>
        <dbReference type="Rhea" id="RHEA-COMP:9670"/>
        <dbReference type="Rhea" id="RHEA-COMP:9704"/>
        <dbReference type="ChEBI" id="CHEBI:15378"/>
        <dbReference type="ChEBI" id="CHEBI:30616"/>
        <dbReference type="ChEBI" id="CHEBI:33019"/>
        <dbReference type="ChEBI" id="CHEBI:57926"/>
        <dbReference type="ChEBI" id="CHEBI:78442"/>
        <dbReference type="ChEBI" id="CHEBI:78534"/>
        <dbReference type="ChEBI" id="CHEBI:456215"/>
        <dbReference type="EC" id="6.1.1.3"/>
    </reaction>
</comment>
<comment type="cofactor">
    <cofactor evidence="1">
        <name>Zn(2+)</name>
        <dbReference type="ChEBI" id="CHEBI:29105"/>
    </cofactor>
    <text evidence="1">Binds 1 zinc ion per subunit.</text>
</comment>
<comment type="subunit">
    <text evidence="1">Homodimer.</text>
</comment>
<comment type="subcellular location">
    <subcellularLocation>
        <location evidence="1">Cytoplasm</location>
    </subcellularLocation>
</comment>
<comment type="similarity">
    <text evidence="1">Belongs to the class-II aminoacyl-tRNA synthetase family.</text>
</comment>
<dbReference type="EC" id="6.1.1.3" evidence="1"/>
<dbReference type="EMBL" id="CP000100">
    <property type="protein sequence ID" value="ABB58636.1"/>
    <property type="molecule type" value="Genomic_DNA"/>
</dbReference>
<dbReference type="RefSeq" id="WP_011378530.1">
    <property type="nucleotide sequence ID" value="NZ_JACJTX010000002.1"/>
</dbReference>
<dbReference type="SMR" id="Q31JY3"/>
<dbReference type="STRING" id="1140.Synpcc7942_2606"/>
<dbReference type="PaxDb" id="1140-Synpcc7942_2606"/>
<dbReference type="GeneID" id="72431507"/>
<dbReference type="KEGG" id="syf:Synpcc7942_2606"/>
<dbReference type="eggNOG" id="COG0441">
    <property type="taxonomic scope" value="Bacteria"/>
</dbReference>
<dbReference type="HOGENOM" id="CLU_008554_3_1_3"/>
<dbReference type="OrthoDB" id="9802304at2"/>
<dbReference type="BioCyc" id="SYNEL:SYNPCC7942_2606-MONOMER"/>
<dbReference type="Proteomes" id="UP000889800">
    <property type="component" value="Chromosome"/>
</dbReference>
<dbReference type="GO" id="GO:0005737">
    <property type="term" value="C:cytoplasm"/>
    <property type="evidence" value="ECO:0007669"/>
    <property type="project" value="UniProtKB-SubCell"/>
</dbReference>
<dbReference type="GO" id="GO:0005524">
    <property type="term" value="F:ATP binding"/>
    <property type="evidence" value="ECO:0007669"/>
    <property type="project" value="UniProtKB-UniRule"/>
</dbReference>
<dbReference type="GO" id="GO:0046872">
    <property type="term" value="F:metal ion binding"/>
    <property type="evidence" value="ECO:0007669"/>
    <property type="project" value="UniProtKB-KW"/>
</dbReference>
<dbReference type="GO" id="GO:0004829">
    <property type="term" value="F:threonine-tRNA ligase activity"/>
    <property type="evidence" value="ECO:0007669"/>
    <property type="project" value="UniProtKB-UniRule"/>
</dbReference>
<dbReference type="GO" id="GO:0000049">
    <property type="term" value="F:tRNA binding"/>
    <property type="evidence" value="ECO:0007669"/>
    <property type="project" value="UniProtKB-KW"/>
</dbReference>
<dbReference type="GO" id="GO:0006435">
    <property type="term" value="P:threonyl-tRNA aminoacylation"/>
    <property type="evidence" value="ECO:0007669"/>
    <property type="project" value="UniProtKB-UniRule"/>
</dbReference>
<dbReference type="CDD" id="cd00860">
    <property type="entry name" value="ThrRS_anticodon"/>
    <property type="match status" value="1"/>
</dbReference>
<dbReference type="CDD" id="cd00771">
    <property type="entry name" value="ThrRS_core"/>
    <property type="match status" value="1"/>
</dbReference>
<dbReference type="FunFam" id="3.30.54.20:FF:000002">
    <property type="entry name" value="Threonine--tRNA ligase"/>
    <property type="match status" value="1"/>
</dbReference>
<dbReference type="FunFam" id="3.30.930.10:FF:000002">
    <property type="entry name" value="Threonine--tRNA ligase"/>
    <property type="match status" value="1"/>
</dbReference>
<dbReference type="FunFam" id="3.40.50.800:FF:000001">
    <property type="entry name" value="Threonine--tRNA ligase"/>
    <property type="match status" value="1"/>
</dbReference>
<dbReference type="Gene3D" id="3.30.54.20">
    <property type="match status" value="1"/>
</dbReference>
<dbReference type="Gene3D" id="3.40.50.800">
    <property type="entry name" value="Anticodon-binding domain"/>
    <property type="match status" value="1"/>
</dbReference>
<dbReference type="Gene3D" id="3.30.930.10">
    <property type="entry name" value="Bira Bifunctional Protein, Domain 2"/>
    <property type="match status" value="1"/>
</dbReference>
<dbReference type="Gene3D" id="3.30.980.10">
    <property type="entry name" value="Threonyl-trna Synthetase, Chain A, domain 2"/>
    <property type="match status" value="1"/>
</dbReference>
<dbReference type="HAMAP" id="MF_00184">
    <property type="entry name" value="Thr_tRNA_synth"/>
    <property type="match status" value="1"/>
</dbReference>
<dbReference type="InterPro" id="IPR002314">
    <property type="entry name" value="aa-tRNA-synt_IIb"/>
</dbReference>
<dbReference type="InterPro" id="IPR006195">
    <property type="entry name" value="aa-tRNA-synth_II"/>
</dbReference>
<dbReference type="InterPro" id="IPR045864">
    <property type="entry name" value="aa-tRNA-synth_II/BPL/LPL"/>
</dbReference>
<dbReference type="InterPro" id="IPR004154">
    <property type="entry name" value="Anticodon-bd"/>
</dbReference>
<dbReference type="InterPro" id="IPR036621">
    <property type="entry name" value="Anticodon-bd_dom_sf"/>
</dbReference>
<dbReference type="InterPro" id="IPR002320">
    <property type="entry name" value="Thr-tRNA-ligase_IIa"/>
</dbReference>
<dbReference type="InterPro" id="IPR018163">
    <property type="entry name" value="Thr/Ala-tRNA-synth_IIc_edit"/>
</dbReference>
<dbReference type="InterPro" id="IPR047246">
    <property type="entry name" value="ThrRS_anticodon"/>
</dbReference>
<dbReference type="InterPro" id="IPR033728">
    <property type="entry name" value="ThrRS_core"/>
</dbReference>
<dbReference type="InterPro" id="IPR012947">
    <property type="entry name" value="tRNA_SAD"/>
</dbReference>
<dbReference type="NCBIfam" id="TIGR00418">
    <property type="entry name" value="thrS"/>
    <property type="match status" value="1"/>
</dbReference>
<dbReference type="PANTHER" id="PTHR11451:SF44">
    <property type="entry name" value="THREONINE--TRNA LIGASE, CHLOROPLASTIC_MITOCHONDRIAL 2"/>
    <property type="match status" value="1"/>
</dbReference>
<dbReference type="PANTHER" id="PTHR11451">
    <property type="entry name" value="THREONINE-TRNA LIGASE"/>
    <property type="match status" value="1"/>
</dbReference>
<dbReference type="Pfam" id="PF03129">
    <property type="entry name" value="HGTP_anticodon"/>
    <property type="match status" value="1"/>
</dbReference>
<dbReference type="Pfam" id="PF00587">
    <property type="entry name" value="tRNA-synt_2b"/>
    <property type="match status" value="1"/>
</dbReference>
<dbReference type="Pfam" id="PF07973">
    <property type="entry name" value="tRNA_SAD"/>
    <property type="match status" value="1"/>
</dbReference>
<dbReference type="PRINTS" id="PR01047">
    <property type="entry name" value="TRNASYNTHTHR"/>
</dbReference>
<dbReference type="SMART" id="SM00863">
    <property type="entry name" value="tRNA_SAD"/>
    <property type="match status" value="1"/>
</dbReference>
<dbReference type="SUPFAM" id="SSF52954">
    <property type="entry name" value="Class II aaRS ABD-related"/>
    <property type="match status" value="1"/>
</dbReference>
<dbReference type="SUPFAM" id="SSF55681">
    <property type="entry name" value="Class II aaRS and biotin synthetases"/>
    <property type="match status" value="1"/>
</dbReference>
<dbReference type="SUPFAM" id="SSF55186">
    <property type="entry name" value="ThrRS/AlaRS common domain"/>
    <property type="match status" value="1"/>
</dbReference>
<dbReference type="PROSITE" id="PS50862">
    <property type="entry name" value="AA_TRNA_LIGASE_II"/>
    <property type="match status" value="1"/>
</dbReference>
<organism>
    <name type="scientific">Synechococcus elongatus (strain ATCC 33912 / PCC 7942 / FACHB-805)</name>
    <name type="common">Anacystis nidulans R2</name>
    <dbReference type="NCBI Taxonomy" id="1140"/>
    <lineage>
        <taxon>Bacteria</taxon>
        <taxon>Bacillati</taxon>
        <taxon>Cyanobacteriota</taxon>
        <taxon>Cyanophyceae</taxon>
        <taxon>Synechococcales</taxon>
        <taxon>Synechococcaceae</taxon>
        <taxon>Synechococcus</taxon>
    </lineage>
</organism>
<evidence type="ECO:0000255" key="1">
    <source>
        <dbReference type="HAMAP-Rule" id="MF_00184"/>
    </source>
</evidence>
<proteinExistence type="inferred from homology"/>
<sequence length="604" mass="68735">MVQSAPSTEAIQLPKTSESAQLKRIRHTMSHVMAMAVQKLFPKAQVTIGPWTETGFYYDFDTPEPFTEADLKAIKKEMVKIIQQKLPVVREEVSREEAQQRIEALGEPYKLEILQGLTEPITLYHLGDRWWDLCAGPHVETTAELNPKAFDLESVAGAYWRGDETKAQLQRIYGTAWETPEQLTEYKRRKEEALKRDHRKLGRELGLFLFADPVGPGLPLWTPKGTILRSTLEDFLKQEQMKRGYQSVVTPHLARVDLFKVSGHWQNYREDMFPMMAEDDEARGLEQGFVLKPMNCPFHIQIYKNELRSYRELPIRLAEFGTVYRYEQSGELGGLTRVRGFTVDDSHLFVRPDQLASEFLSVVDLILSVFKALNLKKFKARLSFRDPESDKYIGSDDVWEKAESAIQAAAETLGMDYFIGVGEAAFYGPKLDFIFQDALDREWQLGTVQVDYNLPERFDLEYVAEDGSRQRPVMIHRAPFGSLERLIGILIEEYAGDFPLWLAPEQIRLLPVTETVLDYCQQVADQLRAIGVRVQVDCSGDRLGKLIRNAEKAKIPVMAVIGAQEAESETLSIRTRATGDLGSLTVADLTKRLSSAIAEKLPHL</sequence>
<accession>Q31JY3</accession>
<reference key="1">
    <citation type="submission" date="2005-08" db="EMBL/GenBank/DDBJ databases">
        <title>Complete sequence of chromosome 1 of Synechococcus elongatus PCC 7942.</title>
        <authorList>
            <consortium name="US DOE Joint Genome Institute"/>
            <person name="Copeland A."/>
            <person name="Lucas S."/>
            <person name="Lapidus A."/>
            <person name="Barry K."/>
            <person name="Detter J.C."/>
            <person name="Glavina T."/>
            <person name="Hammon N."/>
            <person name="Israni S."/>
            <person name="Pitluck S."/>
            <person name="Schmutz J."/>
            <person name="Larimer F."/>
            <person name="Land M."/>
            <person name="Kyrpides N."/>
            <person name="Lykidis A."/>
            <person name="Golden S."/>
            <person name="Richardson P."/>
        </authorList>
    </citation>
    <scope>NUCLEOTIDE SEQUENCE [LARGE SCALE GENOMIC DNA]</scope>
    <source>
        <strain>ATCC 33912 / PCC 7942 / FACHB-805</strain>
    </source>
</reference>
<protein>
    <recommendedName>
        <fullName evidence="1">Threonine--tRNA ligase</fullName>
        <ecNumber evidence="1">6.1.1.3</ecNumber>
    </recommendedName>
    <alternativeName>
        <fullName evidence="1">Threonyl-tRNA synthetase</fullName>
        <shortName evidence="1">ThrRS</shortName>
    </alternativeName>
</protein>
<keyword id="KW-0030">Aminoacyl-tRNA synthetase</keyword>
<keyword id="KW-0067">ATP-binding</keyword>
<keyword id="KW-0963">Cytoplasm</keyword>
<keyword id="KW-0436">Ligase</keyword>
<keyword id="KW-0479">Metal-binding</keyword>
<keyword id="KW-0547">Nucleotide-binding</keyword>
<keyword id="KW-0648">Protein biosynthesis</keyword>
<keyword id="KW-1185">Reference proteome</keyword>
<keyword id="KW-0694">RNA-binding</keyword>
<keyword id="KW-0820">tRNA-binding</keyword>
<keyword id="KW-0862">Zinc</keyword>
<gene>
    <name evidence="1" type="primary">thrS</name>
    <name type="ordered locus">Synpcc7942_2606</name>
</gene>
<feature type="chain" id="PRO_1000020538" description="Threonine--tRNA ligase">
    <location>
        <begin position="1"/>
        <end position="604"/>
    </location>
</feature>
<feature type="region of interest" description="Catalytic" evidence="1">
    <location>
        <begin position="197"/>
        <end position="499"/>
    </location>
</feature>
<feature type="binding site" evidence="1">
    <location>
        <position position="296"/>
    </location>
    <ligand>
        <name>Zn(2+)</name>
        <dbReference type="ChEBI" id="CHEBI:29105"/>
    </ligand>
</feature>
<feature type="binding site" evidence="1">
    <location>
        <position position="347"/>
    </location>
    <ligand>
        <name>Zn(2+)</name>
        <dbReference type="ChEBI" id="CHEBI:29105"/>
    </ligand>
</feature>
<feature type="binding site" evidence="1">
    <location>
        <position position="476"/>
    </location>
    <ligand>
        <name>Zn(2+)</name>
        <dbReference type="ChEBI" id="CHEBI:29105"/>
    </ligand>
</feature>